<gene>
    <name type="primary">Hex-t1</name>
    <name type="synonym">Hex</name>
    <name type="ORF">CG33102</name>
</gene>
<proteinExistence type="evidence at transcript level"/>
<sequence length="465" mass="52260">MANTFNPEEDFPEVYKVCKLFNPSIDDLEKIKNAMDREITMGLSRDHHDRSTVPCHLSYVQDLPTGRERGQFLALEMMPTNCRIMLVKFSSERDIYTSSKCVIMPHTVAAGRGTEVFTFLATSIANFVKEKKVDKDNLPLGIAFAFTLKKLALDVGILVSWTKEFGAQGAIGKDVVQLLRDALAKFPEISVDVMGIINVGAGSLLALCWAQPDTRIGLIMGSIANSCYVERVERCETYEGDEYRKLMIINSDWAHFGDTGQLDFIRNEYDRQLDTESINPGTRIYEKFSGALCMGELVRIIVLRLMKSGAIFAEDRRDYIGIQWKLDMVSLIEIVSDPPGVYTKAQEVMDKFRIRHCKERDLAALKYICDTVTNRAAMLVASGVSCLIDRMRLPQISIAVDGGIYRLHPTFSTVLNKYTRLLADPNYNFEFVITQDSCGVGAAIMAGMAHANKYKTDAKLFTMDY</sequence>
<evidence type="ECO:0000250" key="1"/>
<evidence type="ECO:0000250" key="2">
    <source>
        <dbReference type="UniProtKB" id="A0A0K0JFP3"/>
    </source>
</evidence>
<evidence type="ECO:0000255" key="3"/>
<evidence type="ECO:0000255" key="4">
    <source>
        <dbReference type="PROSITE-ProRule" id="PRU01084"/>
    </source>
</evidence>
<evidence type="ECO:0000269" key="5">
    <source>
    </source>
</evidence>
<evidence type="ECO:0000305" key="6"/>
<feature type="chain" id="PRO_0000197596" description="Hexokinase type 1">
    <location>
        <begin position="1"/>
        <end position="465"/>
    </location>
</feature>
<feature type="domain" description="Hexokinase" evidence="4">
    <location>
        <begin position="8"/>
        <end position="447"/>
    </location>
</feature>
<feature type="region of interest" description="Hexokinase small subdomain" evidence="4">
    <location>
        <begin position="65"/>
        <end position="197"/>
    </location>
</feature>
<feature type="region of interest" description="Glucose-binding" evidence="3">
    <location>
        <begin position="139"/>
        <end position="165"/>
    </location>
</feature>
<feature type="region of interest" description="Hexokinase large subdomain" evidence="4">
    <location>
        <begin position="198"/>
        <end position="436"/>
    </location>
</feature>
<feature type="binding site" evidence="1">
    <location>
        <position position="88"/>
    </location>
    <ligand>
        <name>ATP</name>
        <dbReference type="ChEBI" id="CHEBI:30616"/>
    </ligand>
</feature>
<feature type="sequence variant" description="In strain: HFL97e3_12 and ZIM(S)e3_24." evidence="5">
    <original>N</original>
    <variation>H</variation>
    <location>
        <position position="33"/>
    </location>
</feature>
<feature type="sequence variant" description="In strain: DPF96e3_3.0, DPF96e3_4.2, DPF96e3_23.1, DPF96e3_74.2, VT97e3_41, SC96e3_12.3, HFL97e3_8, HFL97e3_12, HFL97e3_15, ZIM(S)e3_24 and ZIM(S)e3_35." evidence="5">
    <original>Y</original>
    <variation>F</variation>
    <location>
        <position position="243"/>
    </location>
</feature>
<dbReference type="EC" id="2.7.1.1" evidence="2"/>
<dbReference type="EMBL" id="AF257590">
    <property type="protein sequence ID" value="AAG22891.1"/>
    <property type="molecule type" value="Genomic_DNA"/>
</dbReference>
<dbReference type="EMBL" id="AF257591">
    <property type="protein sequence ID" value="AAG22893.1"/>
    <property type="molecule type" value="Genomic_DNA"/>
</dbReference>
<dbReference type="EMBL" id="AF257592">
    <property type="protein sequence ID" value="AAG22895.1"/>
    <property type="molecule type" value="Genomic_DNA"/>
</dbReference>
<dbReference type="EMBL" id="AF257593">
    <property type="protein sequence ID" value="AAG22897.1"/>
    <property type="molecule type" value="Genomic_DNA"/>
</dbReference>
<dbReference type="EMBL" id="AF257594">
    <property type="protein sequence ID" value="AAG22899.1"/>
    <property type="molecule type" value="Genomic_DNA"/>
</dbReference>
<dbReference type="EMBL" id="AF257595">
    <property type="protein sequence ID" value="AAG22901.1"/>
    <property type="molecule type" value="Genomic_DNA"/>
</dbReference>
<dbReference type="EMBL" id="AF257596">
    <property type="protein sequence ID" value="AAG22903.1"/>
    <property type="molecule type" value="Genomic_DNA"/>
</dbReference>
<dbReference type="EMBL" id="AF257597">
    <property type="protein sequence ID" value="AAG22905.1"/>
    <property type="molecule type" value="Genomic_DNA"/>
</dbReference>
<dbReference type="EMBL" id="AF257598">
    <property type="protein sequence ID" value="AAG22907.1"/>
    <property type="molecule type" value="Genomic_DNA"/>
</dbReference>
<dbReference type="EMBL" id="AF257599">
    <property type="protein sequence ID" value="AAG22909.1"/>
    <property type="molecule type" value="Genomic_DNA"/>
</dbReference>
<dbReference type="EMBL" id="AF257600">
    <property type="protein sequence ID" value="AAG22911.1"/>
    <property type="molecule type" value="Genomic_DNA"/>
</dbReference>
<dbReference type="EMBL" id="AF257601">
    <property type="protein sequence ID" value="AAG22913.1"/>
    <property type="molecule type" value="Genomic_DNA"/>
</dbReference>
<dbReference type="EMBL" id="AF257602">
    <property type="protein sequence ID" value="AAG22915.1"/>
    <property type="molecule type" value="Genomic_DNA"/>
</dbReference>
<dbReference type="EMBL" id="AF257603">
    <property type="protein sequence ID" value="AAG22917.1"/>
    <property type="molecule type" value="Genomic_DNA"/>
</dbReference>
<dbReference type="EMBL" id="AF257604">
    <property type="protein sequence ID" value="AAG22919.1"/>
    <property type="molecule type" value="Genomic_DNA"/>
</dbReference>
<dbReference type="EMBL" id="AF257605">
    <property type="protein sequence ID" value="AAG22921.1"/>
    <property type="molecule type" value="Genomic_DNA"/>
</dbReference>
<dbReference type="EMBL" id="AF257606">
    <property type="protein sequence ID" value="AAG22923.1"/>
    <property type="molecule type" value="Genomic_DNA"/>
</dbReference>
<dbReference type="EMBL" id="AF257607">
    <property type="protein sequence ID" value="AAG22925.1"/>
    <property type="molecule type" value="Genomic_DNA"/>
</dbReference>
<dbReference type="EMBL" id="AF257608">
    <property type="protein sequence ID" value="AAG22927.1"/>
    <property type="molecule type" value="Genomic_DNA"/>
</dbReference>
<dbReference type="EMBL" id="AJ271350">
    <property type="protein sequence ID" value="CAB72131.1"/>
    <property type="molecule type" value="Genomic_DNA"/>
</dbReference>
<dbReference type="EMBL" id="AE014297">
    <property type="protein sequence ID" value="AAF56591.2"/>
    <property type="molecule type" value="Genomic_DNA"/>
</dbReference>
<dbReference type="EMBL" id="BT015307">
    <property type="protein sequence ID" value="AAT94535.1"/>
    <property type="molecule type" value="mRNA"/>
</dbReference>
<dbReference type="RefSeq" id="NP_788744.1">
    <property type="nucleotide sequence ID" value="NM_176567.2"/>
</dbReference>
<dbReference type="SMR" id="Q9NFT9"/>
<dbReference type="FunCoup" id="Q9NFT9">
    <property type="interactions" value="273"/>
</dbReference>
<dbReference type="IntAct" id="Q9NFT9">
    <property type="interactions" value="2"/>
</dbReference>
<dbReference type="STRING" id="7227.FBpp0084382"/>
<dbReference type="PaxDb" id="7227-FBpp0084382"/>
<dbReference type="DNASU" id="117364"/>
<dbReference type="EnsemblMetazoa" id="FBtr0085010">
    <property type="protein sequence ID" value="FBpp0084382"/>
    <property type="gene ID" value="FBgn0042711"/>
</dbReference>
<dbReference type="GeneID" id="117364"/>
<dbReference type="KEGG" id="dme:Dmel_CG33102"/>
<dbReference type="UCSC" id="CG33102-RA">
    <property type="organism name" value="d. melanogaster"/>
</dbReference>
<dbReference type="AGR" id="FB:FBgn0042711"/>
<dbReference type="CTD" id="117364"/>
<dbReference type="FlyBase" id="FBgn0042711">
    <property type="gene designation" value="Hex-t1"/>
</dbReference>
<dbReference type="VEuPathDB" id="VectorBase:FBgn0042711"/>
<dbReference type="eggNOG" id="KOG1369">
    <property type="taxonomic scope" value="Eukaryota"/>
</dbReference>
<dbReference type="GeneTree" id="ENSGT00950000182787"/>
<dbReference type="HOGENOM" id="CLU_014393_5_3_1"/>
<dbReference type="InParanoid" id="Q9NFT9"/>
<dbReference type="OMA" id="VYMSSKC"/>
<dbReference type="OrthoDB" id="419537at2759"/>
<dbReference type="PhylomeDB" id="Q9NFT9"/>
<dbReference type="Reactome" id="R-DME-170822">
    <property type="pathway name" value="Regulation of Glucokinase by Glucokinase Regulatory Protein"/>
</dbReference>
<dbReference type="Reactome" id="R-DME-446205">
    <property type="pathway name" value="Synthesis of GDP-mannose"/>
</dbReference>
<dbReference type="Reactome" id="R-DME-6798695">
    <property type="pathway name" value="Neutrophil degranulation"/>
</dbReference>
<dbReference type="Reactome" id="R-DME-70171">
    <property type="pathway name" value="Glycolysis"/>
</dbReference>
<dbReference type="UniPathway" id="UPA00109">
    <property type="reaction ID" value="UER00180"/>
</dbReference>
<dbReference type="UniPathway" id="UPA00242"/>
<dbReference type="BioGRID-ORCS" id="117364">
    <property type="hits" value="0 hits in 3 CRISPR screens"/>
</dbReference>
<dbReference type="GenomeRNAi" id="117364"/>
<dbReference type="PRO" id="PR:Q9NFT9"/>
<dbReference type="Proteomes" id="UP000000803">
    <property type="component" value="Chromosome 3R"/>
</dbReference>
<dbReference type="Bgee" id="FBgn0042711">
    <property type="expression patterns" value="Expressed in early elongation stage spermatid (Drosophila) in testis and 20 other cell types or tissues"/>
</dbReference>
<dbReference type="ExpressionAtlas" id="Q9NFT9">
    <property type="expression patterns" value="baseline and differential"/>
</dbReference>
<dbReference type="GO" id="GO:0005829">
    <property type="term" value="C:cytosol"/>
    <property type="evidence" value="ECO:0000318"/>
    <property type="project" value="GO_Central"/>
</dbReference>
<dbReference type="GO" id="GO:0005739">
    <property type="term" value="C:mitochondrion"/>
    <property type="evidence" value="ECO:0000318"/>
    <property type="project" value="GO_Central"/>
</dbReference>
<dbReference type="GO" id="GO:0005524">
    <property type="term" value="F:ATP binding"/>
    <property type="evidence" value="ECO:0007669"/>
    <property type="project" value="UniProtKB-KW"/>
</dbReference>
<dbReference type="GO" id="GO:0005536">
    <property type="term" value="F:D-glucose binding"/>
    <property type="evidence" value="ECO:0007669"/>
    <property type="project" value="InterPro"/>
</dbReference>
<dbReference type="GO" id="GO:0008865">
    <property type="term" value="F:fructokinase activity"/>
    <property type="evidence" value="ECO:0000318"/>
    <property type="project" value="GO_Central"/>
</dbReference>
<dbReference type="GO" id="GO:0004340">
    <property type="term" value="F:glucokinase activity"/>
    <property type="evidence" value="ECO:0000318"/>
    <property type="project" value="GO_Central"/>
</dbReference>
<dbReference type="GO" id="GO:0061621">
    <property type="term" value="P:canonical glycolysis"/>
    <property type="evidence" value="ECO:0000250"/>
    <property type="project" value="FlyBase"/>
</dbReference>
<dbReference type="GO" id="GO:0051156">
    <property type="term" value="P:glucose 6-phosphate metabolic process"/>
    <property type="evidence" value="ECO:0000250"/>
    <property type="project" value="FlyBase"/>
</dbReference>
<dbReference type="GO" id="GO:0006006">
    <property type="term" value="P:glucose metabolic process"/>
    <property type="evidence" value="ECO:0000318"/>
    <property type="project" value="GO_Central"/>
</dbReference>
<dbReference type="GO" id="GO:0006096">
    <property type="term" value="P:glycolytic process"/>
    <property type="evidence" value="ECO:0000318"/>
    <property type="project" value="GO_Central"/>
</dbReference>
<dbReference type="GO" id="GO:0001678">
    <property type="term" value="P:intracellular glucose homeostasis"/>
    <property type="evidence" value="ECO:0000318"/>
    <property type="project" value="GO_Central"/>
</dbReference>
<dbReference type="Gene3D" id="3.30.420.40">
    <property type="match status" value="1"/>
</dbReference>
<dbReference type="Gene3D" id="3.40.367.20">
    <property type="match status" value="1"/>
</dbReference>
<dbReference type="InterPro" id="IPR043129">
    <property type="entry name" value="ATPase_NBD"/>
</dbReference>
<dbReference type="InterPro" id="IPR001312">
    <property type="entry name" value="Hexokinase"/>
</dbReference>
<dbReference type="InterPro" id="IPR022673">
    <property type="entry name" value="Hexokinase_C"/>
</dbReference>
<dbReference type="InterPro" id="IPR022672">
    <property type="entry name" value="Hexokinase_N"/>
</dbReference>
<dbReference type="PANTHER" id="PTHR19443">
    <property type="entry name" value="HEXOKINASE"/>
    <property type="match status" value="1"/>
</dbReference>
<dbReference type="PANTHER" id="PTHR19443:SF16">
    <property type="entry name" value="HEXOKINASE TYPE 1-RELATED"/>
    <property type="match status" value="1"/>
</dbReference>
<dbReference type="Pfam" id="PF00349">
    <property type="entry name" value="Hexokinase_1"/>
    <property type="match status" value="1"/>
</dbReference>
<dbReference type="Pfam" id="PF03727">
    <property type="entry name" value="Hexokinase_2"/>
    <property type="match status" value="1"/>
</dbReference>
<dbReference type="PRINTS" id="PR00475">
    <property type="entry name" value="HEXOKINASE"/>
</dbReference>
<dbReference type="SUPFAM" id="SSF53067">
    <property type="entry name" value="Actin-like ATPase domain"/>
    <property type="match status" value="2"/>
</dbReference>
<dbReference type="PROSITE" id="PS51748">
    <property type="entry name" value="HEXOKINASE_2"/>
    <property type="match status" value="1"/>
</dbReference>
<organism>
    <name type="scientific">Drosophila melanogaster</name>
    <name type="common">Fruit fly</name>
    <dbReference type="NCBI Taxonomy" id="7227"/>
    <lineage>
        <taxon>Eukaryota</taxon>
        <taxon>Metazoa</taxon>
        <taxon>Ecdysozoa</taxon>
        <taxon>Arthropoda</taxon>
        <taxon>Hexapoda</taxon>
        <taxon>Insecta</taxon>
        <taxon>Pterygota</taxon>
        <taxon>Neoptera</taxon>
        <taxon>Endopterygota</taxon>
        <taxon>Diptera</taxon>
        <taxon>Brachycera</taxon>
        <taxon>Muscomorpha</taxon>
        <taxon>Ephydroidea</taxon>
        <taxon>Drosophilidae</taxon>
        <taxon>Drosophila</taxon>
        <taxon>Sophophora</taxon>
    </lineage>
</organism>
<accession>Q9NFT9</accession>
<accession>Q6AWE1</accession>
<accession>Q9VBF1</accession>
<keyword id="KW-0067">ATP-binding</keyword>
<keyword id="KW-0324">Glycolysis</keyword>
<keyword id="KW-0418">Kinase</keyword>
<keyword id="KW-0547">Nucleotide-binding</keyword>
<keyword id="KW-1185">Reference proteome</keyword>
<keyword id="KW-0808">Transferase</keyword>
<protein>
    <recommendedName>
        <fullName>Hexokinase type 1</fullName>
        <ecNumber evidence="2">2.7.1.1</ecNumber>
    </recommendedName>
</protein>
<comment type="function">
    <text evidence="2">Catalyzes the phosphorylation of various hexoses to hexose 6-phosphate.</text>
</comment>
<comment type="catalytic activity">
    <reaction evidence="2 4">
        <text>a D-hexose + ATP = a D-hexose 6-phosphate + ADP + H(+)</text>
        <dbReference type="Rhea" id="RHEA:22740"/>
        <dbReference type="ChEBI" id="CHEBI:4194"/>
        <dbReference type="ChEBI" id="CHEBI:15378"/>
        <dbReference type="ChEBI" id="CHEBI:30616"/>
        <dbReference type="ChEBI" id="CHEBI:229467"/>
        <dbReference type="ChEBI" id="CHEBI:456216"/>
        <dbReference type="EC" id="2.7.1.1"/>
    </reaction>
    <physiologicalReaction direction="left-to-right" evidence="2">
        <dbReference type="Rhea" id="RHEA:22741"/>
    </physiologicalReaction>
</comment>
<comment type="catalytic activity">
    <reaction evidence="2">
        <text>D-mannose + ATP = D-mannose 6-phosphate + ADP + H(+)</text>
        <dbReference type="Rhea" id="RHEA:11028"/>
        <dbReference type="ChEBI" id="CHEBI:4208"/>
        <dbReference type="ChEBI" id="CHEBI:15378"/>
        <dbReference type="ChEBI" id="CHEBI:30616"/>
        <dbReference type="ChEBI" id="CHEBI:58735"/>
        <dbReference type="ChEBI" id="CHEBI:456216"/>
        <dbReference type="EC" id="2.7.1.1"/>
    </reaction>
    <physiologicalReaction direction="left-to-right" evidence="2">
        <dbReference type="Rhea" id="RHEA:11029"/>
    </physiologicalReaction>
</comment>
<comment type="catalytic activity">
    <reaction evidence="2">
        <text>D-fructose + ATP = D-fructose 6-phosphate + ADP + H(+)</text>
        <dbReference type="Rhea" id="RHEA:16125"/>
        <dbReference type="ChEBI" id="CHEBI:15378"/>
        <dbReference type="ChEBI" id="CHEBI:30616"/>
        <dbReference type="ChEBI" id="CHEBI:37721"/>
        <dbReference type="ChEBI" id="CHEBI:61527"/>
        <dbReference type="ChEBI" id="CHEBI:456216"/>
        <dbReference type="EC" id="2.7.1.1"/>
    </reaction>
    <physiologicalReaction direction="left-to-right" evidence="2">
        <dbReference type="Rhea" id="RHEA:16126"/>
    </physiologicalReaction>
</comment>
<comment type="catalytic activity">
    <reaction evidence="2">
        <text>D-glucose + ATP = D-glucose 6-phosphate + ADP + H(+)</text>
        <dbReference type="Rhea" id="RHEA:17825"/>
        <dbReference type="ChEBI" id="CHEBI:4167"/>
        <dbReference type="ChEBI" id="CHEBI:15378"/>
        <dbReference type="ChEBI" id="CHEBI:30616"/>
        <dbReference type="ChEBI" id="CHEBI:61548"/>
        <dbReference type="ChEBI" id="CHEBI:456216"/>
        <dbReference type="EC" id="2.7.1.1"/>
    </reaction>
    <physiologicalReaction direction="left-to-right" evidence="2">
        <dbReference type="Rhea" id="RHEA:17826"/>
    </physiologicalReaction>
</comment>
<comment type="pathway">
    <text evidence="2">Carbohydrate metabolism; hexose metabolism.</text>
</comment>
<comment type="pathway">
    <text evidence="2">Carbohydrate degradation; glycolysis; D-glyceraldehyde 3-phosphate and glycerone phosphate from D-glucose: step 1/4.</text>
</comment>
<comment type="similarity">
    <text evidence="4 6">Belongs to the hexokinase family.</text>
</comment>
<name>HXK1_DROME</name>
<reference key="1">
    <citation type="journal article" date="2000" name="Genetics">
        <title>Contrasting molecular population genetics of four hexokinases in Drosophila melanogaster, D. simulans and D. yakuba.</title>
        <authorList>
            <person name="Duvernell D.D."/>
            <person name="Eanes W.F."/>
        </authorList>
    </citation>
    <scope>NUCLEOTIDE SEQUENCE [GENOMIC DNA]</scope>
    <scope>VARIANTS HIS-33 AND PHE-243</scope>
    <source>
        <strain>DPF96e3_23.1</strain>
        <strain>DPF96e3_3.0</strain>
        <strain>DPF96e3_4.2</strain>
        <strain>DPF96e3_74.2</strain>
        <strain>DPF96e3_84.3</strain>
        <strain>HFL97e3_12</strain>
        <strain>HFL97e3_13</strain>
        <strain>HFL97e3_15</strain>
        <strain>HFL97e3_16</strain>
        <strain>HFL97e3_8</strain>
        <strain>SC96e3_12.3</strain>
        <strain>SC96e3_19.4</strain>
        <strain>VT97e3_1</strain>
        <strain>VT97e3_39</strain>
        <strain>VT97e3_41</strain>
        <strain>ZIM(H)e3_38.4</strain>
        <strain>ZIM(H)e3_39</strain>
        <strain>ZIM(S)e3_24</strain>
        <strain>ZIM(S)e3_35</strain>
    </source>
</reference>
<reference key="2">
    <citation type="submission" date="2000-01" db="EMBL/GenBank/DDBJ databases">
        <authorList>
            <person name="Deobagkar D.D."/>
            <person name="Kulkarni G.V."/>
            <person name="Deobagkar D.N."/>
        </authorList>
    </citation>
    <scope>NUCLEOTIDE SEQUENCE [GENOMIC DNA]</scope>
    <source>
        <strain>Oregon-K</strain>
    </source>
</reference>
<reference key="3">
    <citation type="journal article" date="2000" name="Science">
        <title>The genome sequence of Drosophila melanogaster.</title>
        <authorList>
            <person name="Adams M.D."/>
            <person name="Celniker S.E."/>
            <person name="Holt R.A."/>
            <person name="Evans C.A."/>
            <person name="Gocayne J.D."/>
            <person name="Amanatides P.G."/>
            <person name="Scherer S.E."/>
            <person name="Li P.W."/>
            <person name="Hoskins R.A."/>
            <person name="Galle R.F."/>
            <person name="George R.A."/>
            <person name="Lewis S.E."/>
            <person name="Richards S."/>
            <person name="Ashburner M."/>
            <person name="Henderson S.N."/>
            <person name="Sutton G.G."/>
            <person name="Wortman J.R."/>
            <person name="Yandell M.D."/>
            <person name="Zhang Q."/>
            <person name="Chen L.X."/>
            <person name="Brandon R.C."/>
            <person name="Rogers Y.-H.C."/>
            <person name="Blazej R.G."/>
            <person name="Champe M."/>
            <person name="Pfeiffer B.D."/>
            <person name="Wan K.H."/>
            <person name="Doyle C."/>
            <person name="Baxter E.G."/>
            <person name="Helt G."/>
            <person name="Nelson C.R."/>
            <person name="Miklos G.L.G."/>
            <person name="Abril J.F."/>
            <person name="Agbayani A."/>
            <person name="An H.-J."/>
            <person name="Andrews-Pfannkoch C."/>
            <person name="Baldwin D."/>
            <person name="Ballew R.M."/>
            <person name="Basu A."/>
            <person name="Baxendale J."/>
            <person name="Bayraktaroglu L."/>
            <person name="Beasley E.M."/>
            <person name="Beeson K.Y."/>
            <person name="Benos P.V."/>
            <person name="Berman B.P."/>
            <person name="Bhandari D."/>
            <person name="Bolshakov S."/>
            <person name="Borkova D."/>
            <person name="Botchan M.R."/>
            <person name="Bouck J."/>
            <person name="Brokstein P."/>
            <person name="Brottier P."/>
            <person name="Burtis K.C."/>
            <person name="Busam D.A."/>
            <person name="Butler H."/>
            <person name="Cadieu E."/>
            <person name="Center A."/>
            <person name="Chandra I."/>
            <person name="Cherry J.M."/>
            <person name="Cawley S."/>
            <person name="Dahlke C."/>
            <person name="Davenport L.B."/>
            <person name="Davies P."/>
            <person name="de Pablos B."/>
            <person name="Delcher A."/>
            <person name="Deng Z."/>
            <person name="Mays A.D."/>
            <person name="Dew I."/>
            <person name="Dietz S.M."/>
            <person name="Dodson K."/>
            <person name="Doup L.E."/>
            <person name="Downes M."/>
            <person name="Dugan-Rocha S."/>
            <person name="Dunkov B.C."/>
            <person name="Dunn P."/>
            <person name="Durbin K.J."/>
            <person name="Evangelista C.C."/>
            <person name="Ferraz C."/>
            <person name="Ferriera S."/>
            <person name="Fleischmann W."/>
            <person name="Fosler C."/>
            <person name="Gabrielian A.E."/>
            <person name="Garg N.S."/>
            <person name="Gelbart W.M."/>
            <person name="Glasser K."/>
            <person name="Glodek A."/>
            <person name="Gong F."/>
            <person name="Gorrell J.H."/>
            <person name="Gu Z."/>
            <person name="Guan P."/>
            <person name="Harris M."/>
            <person name="Harris N.L."/>
            <person name="Harvey D.A."/>
            <person name="Heiman T.J."/>
            <person name="Hernandez J.R."/>
            <person name="Houck J."/>
            <person name="Hostin D."/>
            <person name="Houston K.A."/>
            <person name="Howland T.J."/>
            <person name="Wei M.-H."/>
            <person name="Ibegwam C."/>
            <person name="Jalali M."/>
            <person name="Kalush F."/>
            <person name="Karpen G.H."/>
            <person name="Ke Z."/>
            <person name="Kennison J.A."/>
            <person name="Ketchum K.A."/>
            <person name="Kimmel B.E."/>
            <person name="Kodira C.D."/>
            <person name="Kraft C.L."/>
            <person name="Kravitz S."/>
            <person name="Kulp D."/>
            <person name="Lai Z."/>
            <person name="Lasko P."/>
            <person name="Lei Y."/>
            <person name="Levitsky A.A."/>
            <person name="Li J.H."/>
            <person name="Li Z."/>
            <person name="Liang Y."/>
            <person name="Lin X."/>
            <person name="Liu X."/>
            <person name="Mattei B."/>
            <person name="McIntosh T.C."/>
            <person name="McLeod M.P."/>
            <person name="McPherson D."/>
            <person name="Merkulov G."/>
            <person name="Milshina N.V."/>
            <person name="Mobarry C."/>
            <person name="Morris J."/>
            <person name="Moshrefi A."/>
            <person name="Mount S.M."/>
            <person name="Moy M."/>
            <person name="Murphy B."/>
            <person name="Murphy L."/>
            <person name="Muzny D.M."/>
            <person name="Nelson D.L."/>
            <person name="Nelson D.R."/>
            <person name="Nelson K.A."/>
            <person name="Nixon K."/>
            <person name="Nusskern D.R."/>
            <person name="Pacleb J.M."/>
            <person name="Palazzolo M."/>
            <person name="Pittman G.S."/>
            <person name="Pan S."/>
            <person name="Pollard J."/>
            <person name="Puri V."/>
            <person name="Reese M.G."/>
            <person name="Reinert K."/>
            <person name="Remington K."/>
            <person name="Saunders R.D.C."/>
            <person name="Scheeler F."/>
            <person name="Shen H."/>
            <person name="Shue B.C."/>
            <person name="Siden-Kiamos I."/>
            <person name="Simpson M."/>
            <person name="Skupski M.P."/>
            <person name="Smith T.J."/>
            <person name="Spier E."/>
            <person name="Spradling A.C."/>
            <person name="Stapleton M."/>
            <person name="Strong R."/>
            <person name="Sun E."/>
            <person name="Svirskas R."/>
            <person name="Tector C."/>
            <person name="Turner R."/>
            <person name="Venter E."/>
            <person name="Wang A.H."/>
            <person name="Wang X."/>
            <person name="Wang Z.-Y."/>
            <person name="Wassarman D.A."/>
            <person name="Weinstock G.M."/>
            <person name="Weissenbach J."/>
            <person name="Williams S.M."/>
            <person name="Woodage T."/>
            <person name="Worley K.C."/>
            <person name="Wu D."/>
            <person name="Yang S."/>
            <person name="Yao Q.A."/>
            <person name="Ye J."/>
            <person name="Yeh R.-F."/>
            <person name="Zaveri J.S."/>
            <person name="Zhan M."/>
            <person name="Zhang G."/>
            <person name="Zhao Q."/>
            <person name="Zheng L."/>
            <person name="Zheng X.H."/>
            <person name="Zhong F.N."/>
            <person name="Zhong W."/>
            <person name="Zhou X."/>
            <person name="Zhu S.C."/>
            <person name="Zhu X."/>
            <person name="Smith H.O."/>
            <person name="Gibbs R.A."/>
            <person name="Myers E.W."/>
            <person name="Rubin G.M."/>
            <person name="Venter J.C."/>
        </authorList>
    </citation>
    <scope>NUCLEOTIDE SEQUENCE [LARGE SCALE GENOMIC DNA]</scope>
    <source>
        <strain>Berkeley</strain>
    </source>
</reference>
<reference key="4">
    <citation type="journal article" date="2002" name="Genome Biol.">
        <title>Annotation of the Drosophila melanogaster euchromatic genome: a systematic review.</title>
        <authorList>
            <person name="Misra S."/>
            <person name="Crosby M.A."/>
            <person name="Mungall C.J."/>
            <person name="Matthews B.B."/>
            <person name="Campbell K.S."/>
            <person name="Hradecky P."/>
            <person name="Huang Y."/>
            <person name="Kaminker J.S."/>
            <person name="Millburn G.H."/>
            <person name="Prochnik S.E."/>
            <person name="Smith C.D."/>
            <person name="Tupy J.L."/>
            <person name="Whitfield E.J."/>
            <person name="Bayraktaroglu L."/>
            <person name="Berman B.P."/>
            <person name="Bettencourt B.R."/>
            <person name="Celniker S.E."/>
            <person name="de Grey A.D.N.J."/>
            <person name="Drysdale R.A."/>
            <person name="Harris N.L."/>
            <person name="Richter J."/>
            <person name="Russo S."/>
            <person name="Schroeder A.J."/>
            <person name="Shu S.Q."/>
            <person name="Stapleton M."/>
            <person name="Yamada C."/>
            <person name="Ashburner M."/>
            <person name="Gelbart W.M."/>
            <person name="Rubin G.M."/>
            <person name="Lewis S.E."/>
        </authorList>
    </citation>
    <scope>GENOME REANNOTATION</scope>
    <source>
        <strain>Berkeley</strain>
    </source>
</reference>
<reference key="5">
    <citation type="submission" date="2004-08" db="EMBL/GenBank/DDBJ databases">
        <authorList>
            <person name="Stapleton M."/>
            <person name="Carlson J.W."/>
            <person name="Chavez C."/>
            <person name="Frise E."/>
            <person name="George R.A."/>
            <person name="Pacleb J.M."/>
            <person name="Park S."/>
            <person name="Wan K.H."/>
            <person name="Yu C."/>
            <person name="Rubin G.M."/>
            <person name="Celniker S.E."/>
        </authorList>
    </citation>
    <scope>NUCLEOTIDE SEQUENCE [LARGE SCALE MRNA]</scope>
    <source>
        <strain>Berkeley</strain>
        <tissue>Testis</tissue>
    </source>
</reference>